<feature type="chain" id="PRO_1000166611" description="ATP synthase subunit beta">
    <location>
        <begin position="1"/>
        <end position="468"/>
    </location>
</feature>
<feature type="binding site" evidence="1">
    <location>
        <begin position="155"/>
        <end position="162"/>
    </location>
    <ligand>
        <name>ATP</name>
        <dbReference type="ChEBI" id="CHEBI:30616"/>
    </ligand>
</feature>
<reference key="1">
    <citation type="submission" date="2007-11" db="EMBL/GenBank/DDBJ databases">
        <title>The genome sequence of the hyperthermophilic bacterium Thermotoga neapolitana.</title>
        <authorList>
            <person name="Lim S.K."/>
            <person name="Kim J.S."/>
            <person name="Cha S.H."/>
            <person name="Park B.C."/>
            <person name="Lee D.S."/>
            <person name="Tae H.S."/>
            <person name="Kim S.-J."/>
            <person name="Kim J.J."/>
            <person name="Park K.J."/>
            <person name="Lee S.Y."/>
        </authorList>
    </citation>
    <scope>NUCLEOTIDE SEQUENCE [LARGE SCALE GENOMIC DNA]</scope>
    <source>
        <strain>ATCC 49049 / DSM 4359 / NBRC 107923 / NS-E</strain>
    </source>
</reference>
<proteinExistence type="inferred from homology"/>
<keyword id="KW-0066">ATP synthesis</keyword>
<keyword id="KW-0067">ATP-binding</keyword>
<keyword id="KW-0997">Cell inner membrane</keyword>
<keyword id="KW-1003">Cell membrane</keyword>
<keyword id="KW-0139">CF(1)</keyword>
<keyword id="KW-0375">Hydrogen ion transport</keyword>
<keyword id="KW-0406">Ion transport</keyword>
<keyword id="KW-0472">Membrane</keyword>
<keyword id="KW-0547">Nucleotide-binding</keyword>
<keyword id="KW-1278">Translocase</keyword>
<keyword id="KW-0813">Transport</keyword>
<sequence length="468" mass="51274">MAKGSKGYIVGVMGPVVDVKFPEEELPDIFNALEVVNPQTGQKIVLEVEQLIGDGVVRTVAMDSTDGLMKGLEVVDTGEPITAPVGKEVLGRILNVIGEPVDEAGEIKSKERWPIHRPAPELIEQSTEIEILETGIKVIDLLAPFPKGGKIGFFGGAGVGKTVLVMELIRNIAIEHKGFSVFAGVGERTREGNELWLEMQESGVLGNTVLVFGQMNEPPGARFRVALTALTIAEYFRDVEGRDVLLFIDNIFRFVQAGSEVSALLGRMPSAVGYQPTLATDMGELQERITSTRRGSITSVQAIYVPADDITDPAPATTFAHLDATVVLSRRIAELGLYPAVDPLDSSSKILDPAVVGREHYEVARGVQEVLQRYKDLQDIIAILGVEELSPEDKLVVHRARRIQRFLSQPFHVAERFTGRPGKYVPLEETIRGFKEILDGKLDDVPEQAFLMAGTIDEVKERAKEMRS</sequence>
<protein>
    <recommendedName>
        <fullName evidence="1">ATP synthase subunit beta</fullName>
        <ecNumber evidence="1">7.1.2.2</ecNumber>
    </recommendedName>
    <alternativeName>
        <fullName evidence="1">ATP synthase F1 sector subunit beta</fullName>
    </alternativeName>
    <alternativeName>
        <fullName evidence="1">F-ATPase subunit beta</fullName>
    </alternativeName>
</protein>
<comment type="function">
    <text evidence="1">Produces ATP from ADP in the presence of a proton gradient across the membrane. The catalytic sites are hosted primarily by the beta subunits.</text>
</comment>
<comment type="catalytic activity">
    <reaction evidence="1">
        <text>ATP + H2O + 4 H(+)(in) = ADP + phosphate + 5 H(+)(out)</text>
        <dbReference type="Rhea" id="RHEA:57720"/>
        <dbReference type="ChEBI" id="CHEBI:15377"/>
        <dbReference type="ChEBI" id="CHEBI:15378"/>
        <dbReference type="ChEBI" id="CHEBI:30616"/>
        <dbReference type="ChEBI" id="CHEBI:43474"/>
        <dbReference type="ChEBI" id="CHEBI:456216"/>
        <dbReference type="EC" id="7.1.2.2"/>
    </reaction>
</comment>
<comment type="subunit">
    <text evidence="1">F-type ATPases have 2 components, CF(1) - the catalytic core - and CF(0) - the membrane proton channel. CF(1) has five subunits: alpha(3), beta(3), gamma(1), delta(1), epsilon(1). CF(0) has three main subunits: a(1), b(2) and c(9-12). The alpha and beta chains form an alternating ring which encloses part of the gamma chain. CF(1) is attached to CF(0) by a central stalk formed by the gamma and epsilon chains, while a peripheral stalk is formed by the delta and b chains.</text>
</comment>
<comment type="subcellular location">
    <subcellularLocation>
        <location evidence="1">Cell inner membrane</location>
        <topology evidence="1">Peripheral membrane protein</topology>
    </subcellularLocation>
</comment>
<comment type="similarity">
    <text evidence="1">Belongs to the ATPase alpha/beta chains family.</text>
</comment>
<gene>
    <name evidence="1" type="primary">atpD</name>
    <name type="ordered locus">CTN_0848</name>
</gene>
<organism>
    <name type="scientific">Thermotoga neapolitana (strain ATCC 49049 / DSM 4359 / NBRC 107923 / NS-E)</name>
    <dbReference type="NCBI Taxonomy" id="309803"/>
    <lineage>
        <taxon>Bacteria</taxon>
        <taxon>Thermotogati</taxon>
        <taxon>Thermotogota</taxon>
        <taxon>Thermotogae</taxon>
        <taxon>Thermotogales</taxon>
        <taxon>Thermotogaceae</taxon>
        <taxon>Thermotoga</taxon>
    </lineage>
</organism>
<accession>B9K7U1</accession>
<evidence type="ECO:0000255" key="1">
    <source>
        <dbReference type="HAMAP-Rule" id="MF_01347"/>
    </source>
</evidence>
<dbReference type="EC" id="7.1.2.2" evidence="1"/>
<dbReference type="EMBL" id="CP000916">
    <property type="protein sequence ID" value="ACM23024.1"/>
    <property type="molecule type" value="Genomic_DNA"/>
</dbReference>
<dbReference type="RefSeq" id="WP_015919341.1">
    <property type="nucleotide sequence ID" value="NC_011978.1"/>
</dbReference>
<dbReference type="SMR" id="B9K7U1"/>
<dbReference type="STRING" id="309803.CTN_0848"/>
<dbReference type="KEGG" id="tna:CTN_0848"/>
<dbReference type="eggNOG" id="COG0055">
    <property type="taxonomic scope" value="Bacteria"/>
</dbReference>
<dbReference type="HOGENOM" id="CLU_022398_0_2_0"/>
<dbReference type="Proteomes" id="UP000000445">
    <property type="component" value="Chromosome"/>
</dbReference>
<dbReference type="GO" id="GO:0005886">
    <property type="term" value="C:plasma membrane"/>
    <property type="evidence" value="ECO:0007669"/>
    <property type="project" value="UniProtKB-SubCell"/>
</dbReference>
<dbReference type="GO" id="GO:0045259">
    <property type="term" value="C:proton-transporting ATP synthase complex"/>
    <property type="evidence" value="ECO:0007669"/>
    <property type="project" value="UniProtKB-KW"/>
</dbReference>
<dbReference type="GO" id="GO:0005524">
    <property type="term" value="F:ATP binding"/>
    <property type="evidence" value="ECO:0007669"/>
    <property type="project" value="UniProtKB-UniRule"/>
</dbReference>
<dbReference type="GO" id="GO:0016887">
    <property type="term" value="F:ATP hydrolysis activity"/>
    <property type="evidence" value="ECO:0007669"/>
    <property type="project" value="InterPro"/>
</dbReference>
<dbReference type="GO" id="GO:0046933">
    <property type="term" value="F:proton-transporting ATP synthase activity, rotational mechanism"/>
    <property type="evidence" value="ECO:0007669"/>
    <property type="project" value="UniProtKB-UniRule"/>
</dbReference>
<dbReference type="CDD" id="cd18110">
    <property type="entry name" value="ATP-synt_F1_beta_C"/>
    <property type="match status" value="1"/>
</dbReference>
<dbReference type="CDD" id="cd18115">
    <property type="entry name" value="ATP-synt_F1_beta_N"/>
    <property type="match status" value="1"/>
</dbReference>
<dbReference type="CDD" id="cd01133">
    <property type="entry name" value="F1-ATPase_beta_CD"/>
    <property type="match status" value="1"/>
</dbReference>
<dbReference type="FunFam" id="1.10.1140.10:FF:000001">
    <property type="entry name" value="ATP synthase subunit beta"/>
    <property type="match status" value="1"/>
</dbReference>
<dbReference type="FunFam" id="2.40.10.170:FF:000005">
    <property type="entry name" value="ATP synthase subunit beta"/>
    <property type="match status" value="1"/>
</dbReference>
<dbReference type="FunFam" id="3.40.50.300:FF:000026">
    <property type="entry name" value="ATP synthase subunit beta"/>
    <property type="match status" value="1"/>
</dbReference>
<dbReference type="Gene3D" id="2.40.10.170">
    <property type="match status" value="1"/>
</dbReference>
<dbReference type="Gene3D" id="1.10.1140.10">
    <property type="entry name" value="Bovine Mitochondrial F1-atpase, Atp Synthase Beta Chain, Chain D, domain 3"/>
    <property type="match status" value="1"/>
</dbReference>
<dbReference type="Gene3D" id="3.40.50.300">
    <property type="entry name" value="P-loop containing nucleotide triphosphate hydrolases"/>
    <property type="match status" value="1"/>
</dbReference>
<dbReference type="HAMAP" id="MF_01347">
    <property type="entry name" value="ATP_synth_beta_bact"/>
    <property type="match status" value="1"/>
</dbReference>
<dbReference type="InterPro" id="IPR003593">
    <property type="entry name" value="AAA+_ATPase"/>
</dbReference>
<dbReference type="InterPro" id="IPR055190">
    <property type="entry name" value="ATP-synt_VA_C"/>
</dbReference>
<dbReference type="InterPro" id="IPR005722">
    <property type="entry name" value="ATP_synth_F1_bsu"/>
</dbReference>
<dbReference type="InterPro" id="IPR020003">
    <property type="entry name" value="ATPase_a/bsu_AS"/>
</dbReference>
<dbReference type="InterPro" id="IPR050053">
    <property type="entry name" value="ATPase_alpha/beta_chains"/>
</dbReference>
<dbReference type="InterPro" id="IPR004100">
    <property type="entry name" value="ATPase_F1/V1/A1_a/bsu_N"/>
</dbReference>
<dbReference type="InterPro" id="IPR036121">
    <property type="entry name" value="ATPase_F1/V1/A1_a/bsu_N_sf"/>
</dbReference>
<dbReference type="InterPro" id="IPR000194">
    <property type="entry name" value="ATPase_F1/V1/A1_a/bsu_nucl-bd"/>
</dbReference>
<dbReference type="InterPro" id="IPR024034">
    <property type="entry name" value="ATPase_F1/V1_b/a_C"/>
</dbReference>
<dbReference type="InterPro" id="IPR027417">
    <property type="entry name" value="P-loop_NTPase"/>
</dbReference>
<dbReference type="NCBIfam" id="TIGR01039">
    <property type="entry name" value="atpD"/>
    <property type="match status" value="1"/>
</dbReference>
<dbReference type="PANTHER" id="PTHR15184">
    <property type="entry name" value="ATP SYNTHASE"/>
    <property type="match status" value="1"/>
</dbReference>
<dbReference type="PANTHER" id="PTHR15184:SF71">
    <property type="entry name" value="ATP SYNTHASE SUBUNIT BETA, MITOCHONDRIAL"/>
    <property type="match status" value="1"/>
</dbReference>
<dbReference type="Pfam" id="PF00006">
    <property type="entry name" value="ATP-synt_ab"/>
    <property type="match status" value="1"/>
</dbReference>
<dbReference type="Pfam" id="PF02874">
    <property type="entry name" value="ATP-synt_ab_N"/>
    <property type="match status" value="1"/>
</dbReference>
<dbReference type="Pfam" id="PF22919">
    <property type="entry name" value="ATP-synt_VA_C"/>
    <property type="match status" value="1"/>
</dbReference>
<dbReference type="SMART" id="SM00382">
    <property type="entry name" value="AAA"/>
    <property type="match status" value="1"/>
</dbReference>
<dbReference type="SUPFAM" id="SSF47917">
    <property type="entry name" value="C-terminal domain of alpha and beta subunits of F1 ATP synthase"/>
    <property type="match status" value="1"/>
</dbReference>
<dbReference type="SUPFAM" id="SSF50615">
    <property type="entry name" value="N-terminal domain of alpha and beta subunits of F1 ATP synthase"/>
    <property type="match status" value="1"/>
</dbReference>
<dbReference type="SUPFAM" id="SSF52540">
    <property type="entry name" value="P-loop containing nucleoside triphosphate hydrolases"/>
    <property type="match status" value="1"/>
</dbReference>
<dbReference type="PROSITE" id="PS00152">
    <property type="entry name" value="ATPASE_ALPHA_BETA"/>
    <property type="match status" value="1"/>
</dbReference>
<name>ATPB_THENN</name>